<keyword id="KW-1003">Cell membrane</keyword>
<keyword id="KW-0210">Decarboxylase</keyword>
<keyword id="KW-0444">Lipid biosynthesis</keyword>
<keyword id="KW-0443">Lipid metabolism</keyword>
<keyword id="KW-0456">Lyase</keyword>
<keyword id="KW-0472">Membrane</keyword>
<keyword id="KW-0594">Phospholipid biosynthesis</keyword>
<keyword id="KW-1208">Phospholipid metabolism</keyword>
<keyword id="KW-0670">Pyruvate</keyword>
<keyword id="KW-1185">Reference proteome</keyword>
<keyword id="KW-0865">Zymogen</keyword>
<dbReference type="EC" id="4.1.1.65" evidence="2"/>
<dbReference type="EMBL" id="AF247564">
    <property type="protein sequence ID" value="AAG00421.1"/>
    <property type="molecule type" value="Genomic_DNA"/>
</dbReference>
<dbReference type="EMBL" id="AL591688">
    <property type="protein sequence ID" value="CAC45700.1"/>
    <property type="molecule type" value="Genomic_DNA"/>
</dbReference>
<dbReference type="RefSeq" id="NP_385227.1">
    <property type="nucleotide sequence ID" value="NC_003047.1"/>
</dbReference>
<dbReference type="RefSeq" id="WP_010969055.1">
    <property type="nucleotide sequence ID" value="NC_003047.1"/>
</dbReference>
<dbReference type="EnsemblBacteria" id="CAC45700">
    <property type="protein sequence ID" value="CAC45700"/>
    <property type="gene ID" value="SMc00551"/>
</dbReference>
<dbReference type="KEGG" id="sme:SMc00551"/>
<dbReference type="PATRIC" id="fig|266834.11.peg.2529"/>
<dbReference type="eggNOG" id="COG0688">
    <property type="taxonomic scope" value="Bacteria"/>
</dbReference>
<dbReference type="HOGENOM" id="CLU_072492_0_0_5"/>
<dbReference type="OrthoDB" id="9790893at2"/>
<dbReference type="BRENDA" id="4.1.1.65">
    <property type="organism ID" value="10656"/>
</dbReference>
<dbReference type="UniPathway" id="UPA00558">
    <property type="reaction ID" value="UER00616"/>
</dbReference>
<dbReference type="Proteomes" id="UP000001976">
    <property type="component" value="Chromosome"/>
</dbReference>
<dbReference type="GO" id="GO:0005886">
    <property type="term" value="C:plasma membrane"/>
    <property type="evidence" value="ECO:0007669"/>
    <property type="project" value="UniProtKB-SubCell"/>
</dbReference>
<dbReference type="GO" id="GO:0004609">
    <property type="term" value="F:phosphatidylserine decarboxylase activity"/>
    <property type="evidence" value="ECO:0007669"/>
    <property type="project" value="UniProtKB-UniRule"/>
</dbReference>
<dbReference type="GO" id="GO:0006646">
    <property type="term" value="P:phosphatidylethanolamine biosynthetic process"/>
    <property type="evidence" value="ECO:0007669"/>
    <property type="project" value="UniProtKB-UniRule"/>
</dbReference>
<dbReference type="HAMAP" id="MF_00664">
    <property type="entry name" value="PS_decarb_PSD_A"/>
    <property type="match status" value="1"/>
</dbReference>
<dbReference type="InterPro" id="IPR003817">
    <property type="entry name" value="PS_Dcarbxylase"/>
</dbReference>
<dbReference type="InterPro" id="IPR033175">
    <property type="entry name" value="PSD-A"/>
</dbReference>
<dbReference type="NCBIfam" id="NF003677">
    <property type="entry name" value="PRK05305.1-1"/>
    <property type="match status" value="1"/>
</dbReference>
<dbReference type="NCBIfam" id="NF003678">
    <property type="entry name" value="PRK05305.1-2"/>
    <property type="match status" value="1"/>
</dbReference>
<dbReference type="NCBIfam" id="NF003679">
    <property type="entry name" value="PRK05305.1-3"/>
    <property type="match status" value="1"/>
</dbReference>
<dbReference type="NCBIfam" id="NF003685">
    <property type="entry name" value="PRK05305.2-5"/>
    <property type="match status" value="1"/>
</dbReference>
<dbReference type="PANTHER" id="PTHR35809">
    <property type="entry name" value="ARCHAETIDYLSERINE DECARBOXYLASE PROENZYME-RELATED"/>
    <property type="match status" value="1"/>
</dbReference>
<dbReference type="PANTHER" id="PTHR35809:SF1">
    <property type="entry name" value="ARCHAETIDYLSERINE DECARBOXYLASE PROENZYME-RELATED"/>
    <property type="match status" value="1"/>
</dbReference>
<dbReference type="Pfam" id="PF02666">
    <property type="entry name" value="PS_Dcarbxylase"/>
    <property type="match status" value="1"/>
</dbReference>
<gene>
    <name evidence="2 4" type="primary">psd</name>
    <name type="ordered locus">R01121</name>
    <name type="ORF">SMc00551</name>
</gene>
<reference key="1">
    <citation type="submission" date="2000-03" db="EMBL/GenBank/DDBJ databases">
        <title>Phosphatidylethanolamine is not essential for growth of Sinorhizobium meliloti.</title>
        <authorList>
            <person name="de Rudder K.E.E."/>
            <person name="Lopez-Lara I.M."/>
            <person name="Roehrs V."/>
            <person name="Geiger O."/>
        </authorList>
    </citation>
    <scope>NUCLEOTIDE SEQUENCE [GENOMIC DNA]</scope>
</reference>
<reference key="2">
    <citation type="journal article" date="2001" name="Proc. Natl. Acad. Sci. U.S.A.">
        <title>Analysis of the chromosome sequence of the legume symbiont Sinorhizobium meliloti strain 1021.</title>
        <authorList>
            <person name="Capela D."/>
            <person name="Barloy-Hubler F."/>
            <person name="Gouzy J."/>
            <person name="Bothe G."/>
            <person name="Ampe F."/>
            <person name="Batut J."/>
            <person name="Boistard P."/>
            <person name="Becker A."/>
            <person name="Boutry M."/>
            <person name="Cadieu E."/>
            <person name="Dreano S."/>
            <person name="Gloux S."/>
            <person name="Godrie T."/>
            <person name="Goffeau A."/>
            <person name="Kahn D."/>
            <person name="Kiss E."/>
            <person name="Lelaure V."/>
            <person name="Masuy D."/>
            <person name="Pohl T."/>
            <person name="Portetelle D."/>
            <person name="Puehler A."/>
            <person name="Purnelle B."/>
            <person name="Ramsperger U."/>
            <person name="Renard C."/>
            <person name="Thebault P."/>
            <person name="Vandenbol M."/>
            <person name="Weidner S."/>
            <person name="Galibert F."/>
        </authorList>
    </citation>
    <scope>NUCLEOTIDE SEQUENCE [LARGE SCALE GENOMIC DNA]</scope>
    <source>
        <strain>1021</strain>
    </source>
</reference>
<reference key="3">
    <citation type="journal article" date="2001" name="Science">
        <title>The composite genome of the legume symbiont Sinorhizobium meliloti.</title>
        <authorList>
            <person name="Galibert F."/>
            <person name="Finan T.M."/>
            <person name="Long S.R."/>
            <person name="Puehler A."/>
            <person name="Abola P."/>
            <person name="Ampe F."/>
            <person name="Barloy-Hubler F."/>
            <person name="Barnett M.J."/>
            <person name="Becker A."/>
            <person name="Boistard P."/>
            <person name="Bothe G."/>
            <person name="Boutry M."/>
            <person name="Bowser L."/>
            <person name="Buhrmester J."/>
            <person name="Cadieu E."/>
            <person name="Capela D."/>
            <person name="Chain P."/>
            <person name="Cowie A."/>
            <person name="Davis R.W."/>
            <person name="Dreano S."/>
            <person name="Federspiel N.A."/>
            <person name="Fisher R.F."/>
            <person name="Gloux S."/>
            <person name="Godrie T."/>
            <person name="Goffeau A."/>
            <person name="Golding B."/>
            <person name="Gouzy J."/>
            <person name="Gurjal M."/>
            <person name="Hernandez-Lucas I."/>
            <person name="Hong A."/>
            <person name="Huizar L."/>
            <person name="Hyman R.W."/>
            <person name="Jones T."/>
            <person name="Kahn D."/>
            <person name="Kahn M.L."/>
            <person name="Kalman S."/>
            <person name="Keating D.H."/>
            <person name="Kiss E."/>
            <person name="Komp C."/>
            <person name="Lelaure V."/>
            <person name="Masuy D."/>
            <person name="Palm C."/>
            <person name="Peck M.C."/>
            <person name="Pohl T.M."/>
            <person name="Portetelle D."/>
            <person name="Purnelle B."/>
            <person name="Ramsperger U."/>
            <person name="Surzycki R."/>
            <person name="Thebault P."/>
            <person name="Vandenbol M."/>
            <person name="Vorhoelter F.J."/>
            <person name="Weidner S."/>
            <person name="Wells D.H."/>
            <person name="Wong K."/>
            <person name="Yeh K.-C."/>
            <person name="Batut J."/>
        </authorList>
    </citation>
    <scope>NUCLEOTIDE SEQUENCE [LARGE SCALE GENOMIC DNA]</scope>
    <source>
        <strain>1021</strain>
    </source>
</reference>
<reference key="4">
    <citation type="journal article" date="2008" name="J. Bacteriol.">
        <title>Sinorhizobium meliloti mutants deficient in phosphatidylserine decarboxylase accumulate phosphatidylserine and are strongly affected during symbiosis with alfalfa.</title>
        <authorList>
            <person name="Vences-Guzman M.A."/>
            <person name="Geiger O."/>
            <person name="Sohlenkamp C."/>
        </authorList>
    </citation>
    <scope>FUNCTION</scope>
    <scope>DISRUPTION PHENOTYPE</scope>
</reference>
<feature type="chain" id="PRO_0000029799" description="Phosphatidylserine decarboxylase beta chain" evidence="2">
    <location>
        <begin position="1"/>
        <end position="189"/>
    </location>
</feature>
<feature type="chain" id="PRO_0000029800" description="Phosphatidylserine decarboxylase alpha chain" evidence="2">
    <location>
        <begin position="190"/>
        <end position="232"/>
    </location>
</feature>
<feature type="active site" description="Schiff-base intermediate with substrate; via pyruvic acid" evidence="1 2">
    <location>
        <position position="190"/>
    </location>
</feature>
<feature type="site" description="Cleavage (non-hydrolytic); by autocatalysis" evidence="1 2">
    <location>
        <begin position="189"/>
        <end position="190"/>
    </location>
</feature>
<feature type="modified residue" description="Pyruvic acid (Ser); by autocatalysis" evidence="1 2">
    <location>
        <position position="190"/>
    </location>
</feature>
<name>PSD_RHIME</name>
<organism>
    <name type="scientific">Rhizobium meliloti (strain 1021)</name>
    <name type="common">Ensifer meliloti</name>
    <name type="synonym">Sinorhizobium meliloti</name>
    <dbReference type="NCBI Taxonomy" id="266834"/>
    <lineage>
        <taxon>Bacteria</taxon>
        <taxon>Pseudomonadati</taxon>
        <taxon>Pseudomonadota</taxon>
        <taxon>Alphaproteobacteria</taxon>
        <taxon>Hyphomicrobiales</taxon>
        <taxon>Rhizobiaceae</taxon>
        <taxon>Sinorhizobium/Ensifer group</taxon>
        <taxon>Sinorhizobium</taxon>
    </lineage>
</organism>
<comment type="function">
    <text evidence="2 3">Catalyzes the formation of phosphatidylethanolamine (PtdEtn) from phosphatidylserine (PtdSer). Important for establishment of root nodule symbiosis with the host plant.</text>
</comment>
<comment type="catalytic activity">
    <reaction evidence="1 2">
        <text>a 1,2-diacyl-sn-glycero-3-phospho-L-serine + H(+) = a 1,2-diacyl-sn-glycero-3-phosphoethanolamine + CO2</text>
        <dbReference type="Rhea" id="RHEA:20828"/>
        <dbReference type="ChEBI" id="CHEBI:15378"/>
        <dbReference type="ChEBI" id="CHEBI:16526"/>
        <dbReference type="ChEBI" id="CHEBI:57262"/>
        <dbReference type="ChEBI" id="CHEBI:64612"/>
        <dbReference type="EC" id="4.1.1.65"/>
    </reaction>
</comment>
<comment type="cofactor">
    <cofactor evidence="1 2">
        <name>pyruvate</name>
        <dbReference type="ChEBI" id="CHEBI:15361"/>
    </cofactor>
    <text evidence="1 2">Binds 1 pyruvoyl group covalently per subunit.</text>
</comment>
<comment type="pathway">
    <text evidence="1 2">Phospholipid metabolism; phosphatidylethanolamine biosynthesis; phosphatidylethanolamine from CDP-diacylglycerol: step 2/2.</text>
</comment>
<comment type="subunit">
    <text evidence="1 2">Heterodimer of a large membrane-associated beta subunit and a small pyruvoyl-containing alpha subunit.</text>
</comment>
<comment type="subcellular location">
    <subcellularLocation>
        <location evidence="1 2">Cell membrane</location>
        <topology evidence="1 2">Peripheral membrane protein</topology>
    </subcellularLocation>
</comment>
<comment type="PTM">
    <text evidence="1 2">Is synthesized initially as an inactive proenzyme. Formation of the active enzyme involves a self-maturation process in which the active site pyruvoyl group is generated from an internal serine residue via an autocatalytic post-translational modification. Two non-identical subunits are generated from the proenzyme in this reaction, and the pyruvate is formed at the N-terminus of the alpha chain, which is derived from the carboxyl end of the proenzyme. The post-translation cleavage follows an unusual pathway, termed non-hydrolytic serinolysis, in which the side chain hydroxyl group of the serine supplies its oxygen atom to form the C-terminus of the beta chain, while the remainder of the serine residue undergoes an oxidative deamination to produce ammonia and the pyruvoyl prosthetic group on the alpha chain.</text>
</comment>
<comment type="disruption phenotype">
    <text evidence="3">Initiates nodule formation in the alfalfa host plant much later than the wild-type and forms 90% fewer nodules. The nodules are almost devoid of bacteria and are unable to fix nitrogen.</text>
</comment>
<comment type="similarity">
    <text evidence="2">Belongs to the phosphatidylserine decarboxylase family. PSD-A subfamily.</text>
</comment>
<accession>Q9FDI9</accession>
<evidence type="ECO:0000250" key="1">
    <source>
        <dbReference type="UniProtKB" id="P0A8K1"/>
    </source>
</evidence>
<evidence type="ECO:0000255" key="2">
    <source>
        <dbReference type="HAMAP-Rule" id="MF_00664"/>
    </source>
</evidence>
<evidence type="ECO:0000269" key="3">
    <source>
    </source>
</evidence>
<evidence type="ECO:0000303" key="4">
    <source>
    </source>
</evidence>
<sequence>MSLIDTVRNTLVPVHREGYRFIAIFFVVSLALGFLWEPLMWIGFVLTAWCAYFFRDPERMTPIDDDLVISPADGTVSSVATVMPPEELGLGSEPMLRISVFMNVFNCHVNRAPMGGTVRRIAYRAGKFVNAELDKASQENERNGLVIETKHGQIGVVQIAGLVARRILCWTRESASLEAGERFGLIRFGSRLDVFLPAGAEPRVTVGQTATGGETVLAEFGSAKGPVISRRA</sequence>
<proteinExistence type="inferred from homology"/>
<protein>
    <recommendedName>
        <fullName evidence="2 4">Phosphatidylserine decarboxylase proenzyme</fullName>
        <ecNumber evidence="2">4.1.1.65</ecNumber>
    </recommendedName>
    <component>
        <recommendedName>
            <fullName evidence="2">Phosphatidylserine decarboxylase alpha chain</fullName>
        </recommendedName>
    </component>
    <component>
        <recommendedName>
            <fullName evidence="2">Phosphatidylserine decarboxylase beta chain</fullName>
        </recommendedName>
    </component>
</protein>